<dbReference type="EC" id="2.1.1.-"/>
<dbReference type="EMBL" id="CU329672">
    <property type="protein sequence ID" value="CAA19358.1"/>
    <property type="molecule type" value="Genomic_DNA"/>
</dbReference>
<dbReference type="PIR" id="T41554">
    <property type="entry name" value="T41554"/>
</dbReference>
<dbReference type="RefSeq" id="NP_588543.1">
    <property type="nucleotide sequence ID" value="NM_001023530.1"/>
</dbReference>
<dbReference type="SMR" id="O74529"/>
<dbReference type="BioGRID" id="276145">
    <property type="interactions" value="14"/>
</dbReference>
<dbReference type="STRING" id="284812.O74529"/>
<dbReference type="PaxDb" id="4896-SPCC70.08c.1"/>
<dbReference type="DNASU" id="2539586"/>
<dbReference type="EnsemblFungi" id="SPCC70.08c.1">
    <property type="protein sequence ID" value="SPCC70.08c.1:pep"/>
    <property type="gene ID" value="SPCC70.08c"/>
</dbReference>
<dbReference type="KEGG" id="spo:2539586"/>
<dbReference type="PomBase" id="SPCC70.08c"/>
<dbReference type="VEuPathDB" id="FungiDB:SPCC70.08c"/>
<dbReference type="eggNOG" id="ENOG502RZIN">
    <property type="taxonomic scope" value="Eukaryota"/>
</dbReference>
<dbReference type="HOGENOM" id="CLU_037990_5_3_1"/>
<dbReference type="InParanoid" id="O74529"/>
<dbReference type="OMA" id="WYFPSIG"/>
<dbReference type="PhylomeDB" id="O74529"/>
<dbReference type="Reactome" id="R-SPO-6798695">
    <property type="pathway name" value="Neutrophil degranulation"/>
</dbReference>
<dbReference type="PRO" id="PR:O74529"/>
<dbReference type="Proteomes" id="UP000002485">
    <property type="component" value="Chromosome III"/>
</dbReference>
<dbReference type="GO" id="GO:0005829">
    <property type="term" value="C:cytosol"/>
    <property type="evidence" value="ECO:0007005"/>
    <property type="project" value="PomBase"/>
</dbReference>
<dbReference type="GO" id="GO:0005634">
    <property type="term" value="C:nucleus"/>
    <property type="evidence" value="ECO:0007005"/>
    <property type="project" value="PomBase"/>
</dbReference>
<dbReference type="GO" id="GO:0008168">
    <property type="term" value="F:methyltransferase activity"/>
    <property type="evidence" value="ECO:0000318"/>
    <property type="project" value="GO_Central"/>
</dbReference>
<dbReference type="GO" id="GO:0008757">
    <property type="term" value="F:S-adenosylmethionine-dependent methyltransferase activity"/>
    <property type="evidence" value="ECO:0007669"/>
    <property type="project" value="InterPro"/>
</dbReference>
<dbReference type="GO" id="GO:0032259">
    <property type="term" value="P:methylation"/>
    <property type="evidence" value="ECO:0007669"/>
    <property type="project" value="UniProtKB-KW"/>
</dbReference>
<dbReference type="CDD" id="cd02440">
    <property type="entry name" value="AdoMet_MTases"/>
    <property type="match status" value="1"/>
</dbReference>
<dbReference type="Gene3D" id="3.40.50.150">
    <property type="entry name" value="Vaccinia Virus protein VP39"/>
    <property type="match status" value="1"/>
</dbReference>
<dbReference type="InterPro" id="IPR013216">
    <property type="entry name" value="Methyltransf_11"/>
</dbReference>
<dbReference type="InterPro" id="IPR029063">
    <property type="entry name" value="SAM-dependent_MTases_sf"/>
</dbReference>
<dbReference type="PANTHER" id="PTHR43861:SF1">
    <property type="entry name" value="TRANS-ACONITATE 2-METHYLTRANSFERASE"/>
    <property type="match status" value="1"/>
</dbReference>
<dbReference type="PANTHER" id="PTHR43861">
    <property type="entry name" value="TRANS-ACONITATE 2-METHYLTRANSFERASE-RELATED"/>
    <property type="match status" value="1"/>
</dbReference>
<dbReference type="Pfam" id="PF08241">
    <property type="entry name" value="Methyltransf_11"/>
    <property type="match status" value="1"/>
</dbReference>
<dbReference type="SUPFAM" id="SSF53335">
    <property type="entry name" value="S-adenosyl-L-methionine-dependent methyltransferases"/>
    <property type="match status" value="1"/>
</dbReference>
<name>YJ48_SCHPO</name>
<reference key="1">
    <citation type="journal article" date="2002" name="Nature">
        <title>The genome sequence of Schizosaccharomyces pombe.</title>
        <authorList>
            <person name="Wood V."/>
            <person name="Gwilliam R."/>
            <person name="Rajandream M.A."/>
            <person name="Lyne M.H."/>
            <person name="Lyne R."/>
            <person name="Stewart A."/>
            <person name="Sgouros J.G."/>
            <person name="Peat N."/>
            <person name="Hayles J."/>
            <person name="Baker S.G."/>
            <person name="Basham D."/>
            <person name="Bowman S."/>
            <person name="Brooks K."/>
            <person name="Brown D."/>
            <person name="Brown S."/>
            <person name="Chillingworth T."/>
            <person name="Churcher C.M."/>
            <person name="Collins M."/>
            <person name="Connor R."/>
            <person name="Cronin A."/>
            <person name="Davis P."/>
            <person name="Feltwell T."/>
            <person name="Fraser A."/>
            <person name="Gentles S."/>
            <person name="Goble A."/>
            <person name="Hamlin N."/>
            <person name="Harris D.E."/>
            <person name="Hidalgo J."/>
            <person name="Hodgson G."/>
            <person name="Holroyd S."/>
            <person name="Hornsby T."/>
            <person name="Howarth S."/>
            <person name="Huckle E.J."/>
            <person name="Hunt S."/>
            <person name="Jagels K."/>
            <person name="James K.D."/>
            <person name="Jones L."/>
            <person name="Jones M."/>
            <person name="Leather S."/>
            <person name="McDonald S."/>
            <person name="McLean J."/>
            <person name="Mooney P."/>
            <person name="Moule S."/>
            <person name="Mungall K.L."/>
            <person name="Murphy L.D."/>
            <person name="Niblett D."/>
            <person name="Odell C."/>
            <person name="Oliver K."/>
            <person name="O'Neil S."/>
            <person name="Pearson D."/>
            <person name="Quail M.A."/>
            <person name="Rabbinowitsch E."/>
            <person name="Rutherford K.M."/>
            <person name="Rutter S."/>
            <person name="Saunders D."/>
            <person name="Seeger K."/>
            <person name="Sharp S."/>
            <person name="Skelton J."/>
            <person name="Simmonds M.N."/>
            <person name="Squares R."/>
            <person name="Squares S."/>
            <person name="Stevens K."/>
            <person name="Taylor K."/>
            <person name="Taylor R.G."/>
            <person name="Tivey A."/>
            <person name="Walsh S.V."/>
            <person name="Warren T."/>
            <person name="Whitehead S."/>
            <person name="Woodward J.R."/>
            <person name="Volckaert G."/>
            <person name="Aert R."/>
            <person name="Robben J."/>
            <person name="Grymonprez B."/>
            <person name="Weltjens I."/>
            <person name="Vanstreels E."/>
            <person name="Rieger M."/>
            <person name="Schaefer M."/>
            <person name="Mueller-Auer S."/>
            <person name="Gabel C."/>
            <person name="Fuchs M."/>
            <person name="Duesterhoeft A."/>
            <person name="Fritzc C."/>
            <person name="Holzer E."/>
            <person name="Moestl D."/>
            <person name="Hilbert H."/>
            <person name="Borzym K."/>
            <person name="Langer I."/>
            <person name="Beck A."/>
            <person name="Lehrach H."/>
            <person name="Reinhardt R."/>
            <person name="Pohl T.M."/>
            <person name="Eger P."/>
            <person name="Zimmermann W."/>
            <person name="Wedler H."/>
            <person name="Wambutt R."/>
            <person name="Purnelle B."/>
            <person name="Goffeau A."/>
            <person name="Cadieu E."/>
            <person name="Dreano S."/>
            <person name="Gloux S."/>
            <person name="Lelaure V."/>
            <person name="Mottier S."/>
            <person name="Galibert F."/>
            <person name="Aves S.J."/>
            <person name="Xiang Z."/>
            <person name="Hunt C."/>
            <person name="Moore K."/>
            <person name="Hurst S.M."/>
            <person name="Lucas M."/>
            <person name="Rochet M."/>
            <person name="Gaillardin C."/>
            <person name="Tallada V.A."/>
            <person name="Garzon A."/>
            <person name="Thode G."/>
            <person name="Daga R.R."/>
            <person name="Cruzado L."/>
            <person name="Jimenez J."/>
            <person name="Sanchez M."/>
            <person name="del Rey F."/>
            <person name="Benito J."/>
            <person name="Dominguez A."/>
            <person name="Revuelta J.L."/>
            <person name="Moreno S."/>
            <person name="Armstrong J."/>
            <person name="Forsburg S.L."/>
            <person name="Cerutti L."/>
            <person name="Lowe T."/>
            <person name="McCombie W.R."/>
            <person name="Paulsen I."/>
            <person name="Potashkin J."/>
            <person name="Shpakovski G.V."/>
            <person name="Ussery D."/>
            <person name="Barrell B.G."/>
            <person name="Nurse P."/>
        </authorList>
    </citation>
    <scope>NUCLEOTIDE SEQUENCE [LARGE SCALE GENOMIC DNA]</scope>
    <source>
        <strain>972 / ATCC 24843</strain>
    </source>
</reference>
<reference key="2">
    <citation type="journal article" date="2006" name="Nat. Biotechnol.">
        <title>ORFeome cloning and global analysis of protein localization in the fission yeast Schizosaccharomyces pombe.</title>
        <authorList>
            <person name="Matsuyama A."/>
            <person name="Arai R."/>
            <person name="Yashiroda Y."/>
            <person name="Shirai A."/>
            <person name="Kamata A."/>
            <person name="Sekido S."/>
            <person name="Kobayashi Y."/>
            <person name="Hashimoto A."/>
            <person name="Hamamoto M."/>
            <person name="Hiraoka Y."/>
            <person name="Horinouchi S."/>
            <person name="Yoshida M."/>
        </authorList>
    </citation>
    <scope>SUBCELLULAR LOCATION [LARGE SCALE ANALYSIS]</scope>
</reference>
<comment type="function">
    <text evidence="1">Probable methyltransferase.</text>
</comment>
<comment type="subcellular location">
    <subcellularLocation>
        <location evidence="2">Cytoplasm</location>
    </subcellularLocation>
    <subcellularLocation>
        <location evidence="2">Nucleus</location>
    </subcellularLocation>
</comment>
<comment type="similarity">
    <text evidence="3">Belongs to the methyltransferase superfamily.</text>
</comment>
<proteinExistence type="inferred from homology"/>
<organism>
    <name type="scientific">Schizosaccharomyces pombe (strain 972 / ATCC 24843)</name>
    <name type="common">Fission yeast</name>
    <dbReference type="NCBI Taxonomy" id="284812"/>
    <lineage>
        <taxon>Eukaryota</taxon>
        <taxon>Fungi</taxon>
        <taxon>Dikarya</taxon>
        <taxon>Ascomycota</taxon>
        <taxon>Taphrinomycotina</taxon>
        <taxon>Schizosaccharomycetes</taxon>
        <taxon>Schizosaccharomycetales</taxon>
        <taxon>Schizosaccharomycetaceae</taxon>
        <taxon>Schizosaccharomyces</taxon>
    </lineage>
</organism>
<feature type="chain" id="PRO_0000339149" description="Uncharacterized methyltransferase C70.08c">
    <location>
        <begin position="1"/>
        <end position="260"/>
    </location>
</feature>
<protein>
    <recommendedName>
        <fullName>Uncharacterized methyltransferase C70.08c</fullName>
        <ecNumber>2.1.1.-</ecNumber>
    </recommendedName>
</protein>
<evidence type="ECO:0000250" key="1"/>
<evidence type="ECO:0000269" key="2">
    <source>
    </source>
</evidence>
<evidence type="ECO:0000305" key="3"/>
<accession>O74529</accession>
<gene>
    <name type="ORF">SPCC70.08c</name>
</gene>
<keyword id="KW-0963">Cytoplasm</keyword>
<keyword id="KW-0489">Methyltransferase</keyword>
<keyword id="KW-0539">Nucleus</keyword>
<keyword id="KW-1185">Reference proteome</keyword>
<keyword id="KW-0808">Transferase</keyword>
<sequence length="260" mass="29689">MPEDYWSAKDYQRNASFVPKLTKDIVKRINLSSSDELLDLGCGDGVLTNELVSQCRRVVGIDASPDMIKAARELGLNAYVIPGEKLLDASEIPSESFDVVFSNAALHWIMRQPKNRPIVMKGVSRVLRTKGRFVAECGAFGNVSEVVGSIYSILLALGATKEQIDQANPWFFGSEDDYTRMLEEAGFHVEYVENISRPTLLNKDVREWLDTFAQHFYHAFPQWKDIIRETVYNALLVTDCRSDGKWFLQYRRLRFVAHKE</sequence>